<organism>
    <name type="scientific">Staphylococcus aureus (strain MRSA252)</name>
    <dbReference type="NCBI Taxonomy" id="282458"/>
    <lineage>
        <taxon>Bacteria</taxon>
        <taxon>Bacillati</taxon>
        <taxon>Bacillota</taxon>
        <taxon>Bacilli</taxon>
        <taxon>Bacillales</taxon>
        <taxon>Staphylococcaceae</taxon>
        <taxon>Staphylococcus</taxon>
    </lineage>
</organism>
<name>TGT_STAAR</name>
<dbReference type="EC" id="2.4.2.29" evidence="1"/>
<dbReference type="EMBL" id="BX571856">
    <property type="protein sequence ID" value="CAG40710.1"/>
    <property type="molecule type" value="Genomic_DNA"/>
</dbReference>
<dbReference type="RefSeq" id="WP_001112045.1">
    <property type="nucleotide sequence ID" value="NC_002952.2"/>
</dbReference>
<dbReference type="SMR" id="Q6GG65"/>
<dbReference type="KEGG" id="sar:SAR1719"/>
<dbReference type="HOGENOM" id="CLU_022060_0_1_9"/>
<dbReference type="UniPathway" id="UPA00392"/>
<dbReference type="Proteomes" id="UP000000596">
    <property type="component" value="Chromosome"/>
</dbReference>
<dbReference type="GO" id="GO:0005829">
    <property type="term" value="C:cytosol"/>
    <property type="evidence" value="ECO:0007669"/>
    <property type="project" value="TreeGrafter"/>
</dbReference>
<dbReference type="GO" id="GO:0046872">
    <property type="term" value="F:metal ion binding"/>
    <property type="evidence" value="ECO:0007669"/>
    <property type="project" value="UniProtKB-KW"/>
</dbReference>
<dbReference type="GO" id="GO:0008479">
    <property type="term" value="F:tRNA-guanosine(34) queuine transglycosylase activity"/>
    <property type="evidence" value="ECO:0007669"/>
    <property type="project" value="UniProtKB-UniRule"/>
</dbReference>
<dbReference type="GO" id="GO:0008616">
    <property type="term" value="P:queuosine biosynthetic process"/>
    <property type="evidence" value="ECO:0007669"/>
    <property type="project" value="UniProtKB-UniRule"/>
</dbReference>
<dbReference type="GO" id="GO:0002099">
    <property type="term" value="P:tRNA wobble guanine modification"/>
    <property type="evidence" value="ECO:0007669"/>
    <property type="project" value="TreeGrafter"/>
</dbReference>
<dbReference type="GO" id="GO:0101030">
    <property type="term" value="P:tRNA-guanine transglycosylation"/>
    <property type="evidence" value="ECO:0007669"/>
    <property type="project" value="InterPro"/>
</dbReference>
<dbReference type="FunFam" id="3.20.20.105:FF:000001">
    <property type="entry name" value="Queuine tRNA-ribosyltransferase"/>
    <property type="match status" value="1"/>
</dbReference>
<dbReference type="Gene3D" id="3.20.20.105">
    <property type="entry name" value="Queuine tRNA-ribosyltransferase-like"/>
    <property type="match status" value="1"/>
</dbReference>
<dbReference type="HAMAP" id="MF_00168">
    <property type="entry name" value="Q_tRNA_Tgt"/>
    <property type="match status" value="1"/>
</dbReference>
<dbReference type="InterPro" id="IPR050076">
    <property type="entry name" value="ArchSynthase1/Queuine_TRR"/>
</dbReference>
<dbReference type="InterPro" id="IPR004803">
    <property type="entry name" value="TGT"/>
</dbReference>
<dbReference type="InterPro" id="IPR036511">
    <property type="entry name" value="TGT-like_sf"/>
</dbReference>
<dbReference type="InterPro" id="IPR002616">
    <property type="entry name" value="tRNA_ribo_trans-like"/>
</dbReference>
<dbReference type="NCBIfam" id="TIGR00430">
    <property type="entry name" value="Q_tRNA_tgt"/>
    <property type="match status" value="1"/>
</dbReference>
<dbReference type="NCBIfam" id="TIGR00449">
    <property type="entry name" value="tgt_general"/>
    <property type="match status" value="1"/>
</dbReference>
<dbReference type="PANTHER" id="PTHR46499">
    <property type="entry name" value="QUEUINE TRNA-RIBOSYLTRANSFERASE"/>
    <property type="match status" value="1"/>
</dbReference>
<dbReference type="PANTHER" id="PTHR46499:SF1">
    <property type="entry name" value="QUEUINE TRNA-RIBOSYLTRANSFERASE"/>
    <property type="match status" value="1"/>
</dbReference>
<dbReference type="Pfam" id="PF01702">
    <property type="entry name" value="TGT"/>
    <property type="match status" value="1"/>
</dbReference>
<dbReference type="SUPFAM" id="SSF51713">
    <property type="entry name" value="tRNA-guanine transglycosylase"/>
    <property type="match status" value="1"/>
</dbReference>
<feature type="chain" id="PRO_0000135525" description="Queuine tRNA-ribosyltransferase">
    <location>
        <begin position="1"/>
        <end position="379"/>
    </location>
</feature>
<feature type="region of interest" description="RNA binding" evidence="1">
    <location>
        <begin position="249"/>
        <end position="255"/>
    </location>
</feature>
<feature type="region of interest" description="RNA binding; important for wobble base 34 recognition" evidence="1">
    <location>
        <begin position="273"/>
        <end position="277"/>
    </location>
</feature>
<feature type="active site" description="Proton acceptor" evidence="1">
    <location>
        <position position="94"/>
    </location>
</feature>
<feature type="active site" description="Nucleophile" evidence="1">
    <location>
        <position position="268"/>
    </location>
</feature>
<feature type="binding site" evidence="1">
    <location>
        <begin position="94"/>
        <end position="98"/>
    </location>
    <ligand>
        <name>substrate</name>
    </ligand>
</feature>
<feature type="binding site" evidence="1">
    <location>
        <position position="148"/>
    </location>
    <ligand>
        <name>substrate</name>
    </ligand>
</feature>
<feature type="binding site" evidence="1">
    <location>
        <position position="191"/>
    </location>
    <ligand>
        <name>substrate</name>
    </ligand>
</feature>
<feature type="binding site" evidence="1">
    <location>
        <position position="218"/>
    </location>
    <ligand>
        <name>substrate</name>
    </ligand>
</feature>
<feature type="binding site" evidence="1">
    <location>
        <position position="306"/>
    </location>
    <ligand>
        <name>Zn(2+)</name>
        <dbReference type="ChEBI" id="CHEBI:29105"/>
    </ligand>
</feature>
<feature type="binding site" evidence="1">
    <location>
        <position position="308"/>
    </location>
    <ligand>
        <name>Zn(2+)</name>
        <dbReference type="ChEBI" id="CHEBI:29105"/>
    </ligand>
</feature>
<feature type="binding site" evidence="1">
    <location>
        <position position="311"/>
    </location>
    <ligand>
        <name>Zn(2+)</name>
        <dbReference type="ChEBI" id="CHEBI:29105"/>
    </ligand>
</feature>
<feature type="binding site" evidence="1">
    <location>
        <position position="337"/>
    </location>
    <ligand>
        <name>Zn(2+)</name>
        <dbReference type="ChEBI" id="CHEBI:29105"/>
    </ligand>
</feature>
<sequence length="379" mass="43310">MPAVTYEHIKTCKQSGARLGIVHTPHGSFETPMFMPVGTKATVKTMSPEELRQIEAKIILGNTYHLWLQPGNDIIKHAGGLHKFMNWDGPILTDSGGFQVFSLSNLRKITEEGVEFRHHTNGSKLFLSPEKSMQIQNDLGSDIMMAFDECPPMPAEYDYVKKSIERTTRWAKRCLDAHQRPEDQALFGIIQGGEYEDLREQSAKDLVELDFPGYAIGGLSVGEPKPVMYKMVEHTEQFMPKDKPRYLMGVGSPDALIECSIRGMDMFDCVLPTRIARNGTCMTSQGRLVIKNAKFADDLRPLDENCDCYTCQNYSRAYIRHLIKAEETFGIRLTTIHNLHFLLKLMEDIRQAIREDRLLDFKEEFFEQYGLNVENPKNF</sequence>
<evidence type="ECO:0000255" key="1">
    <source>
        <dbReference type="HAMAP-Rule" id="MF_00168"/>
    </source>
</evidence>
<keyword id="KW-0328">Glycosyltransferase</keyword>
<keyword id="KW-0479">Metal-binding</keyword>
<keyword id="KW-0671">Queuosine biosynthesis</keyword>
<keyword id="KW-0808">Transferase</keyword>
<keyword id="KW-0819">tRNA processing</keyword>
<keyword id="KW-0862">Zinc</keyword>
<comment type="function">
    <text evidence="1">Catalyzes the base-exchange of a guanine (G) residue with the queuine precursor 7-aminomethyl-7-deazaguanine (PreQ1) at position 34 (anticodon wobble position) in tRNAs with GU(N) anticodons (tRNA-Asp, -Asn, -His and -Tyr). Catalysis occurs through a double-displacement mechanism. The nucleophile active site attacks the C1' of nucleotide 34 to detach the guanine base from the RNA, forming a covalent enzyme-RNA intermediate. The proton acceptor active site deprotonates the incoming PreQ1, allowing a nucleophilic attack on the C1' of the ribose to form the product. After dissociation, two additional enzymatic reactions on the tRNA convert PreQ1 to queuine (Q), resulting in the hypermodified nucleoside queuosine (7-(((4,5-cis-dihydroxy-2-cyclopenten-1-yl)amino)methyl)-7-deazaguanosine).</text>
</comment>
<comment type="catalytic activity">
    <reaction evidence="1">
        <text>7-aminomethyl-7-carbaguanine + guanosine(34) in tRNA = 7-aminomethyl-7-carbaguanosine(34) in tRNA + guanine</text>
        <dbReference type="Rhea" id="RHEA:24104"/>
        <dbReference type="Rhea" id="RHEA-COMP:10341"/>
        <dbReference type="Rhea" id="RHEA-COMP:10342"/>
        <dbReference type="ChEBI" id="CHEBI:16235"/>
        <dbReference type="ChEBI" id="CHEBI:58703"/>
        <dbReference type="ChEBI" id="CHEBI:74269"/>
        <dbReference type="ChEBI" id="CHEBI:82833"/>
        <dbReference type="EC" id="2.4.2.29"/>
    </reaction>
</comment>
<comment type="cofactor">
    <cofactor evidence="1">
        <name>Zn(2+)</name>
        <dbReference type="ChEBI" id="CHEBI:29105"/>
    </cofactor>
    <text evidence="1">Binds 1 zinc ion per subunit.</text>
</comment>
<comment type="pathway">
    <text evidence="1">tRNA modification; tRNA-queuosine biosynthesis.</text>
</comment>
<comment type="subunit">
    <text evidence="1">Homodimer. Within each dimer, one monomer is responsible for RNA recognition and catalysis, while the other monomer binds to the replacement base PreQ1.</text>
</comment>
<comment type="similarity">
    <text evidence="1">Belongs to the queuine tRNA-ribosyltransferase family.</text>
</comment>
<protein>
    <recommendedName>
        <fullName evidence="1">Queuine tRNA-ribosyltransferase</fullName>
        <ecNumber evidence="1">2.4.2.29</ecNumber>
    </recommendedName>
    <alternativeName>
        <fullName evidence="1">Guanine insertion enzyme</fullName>
    </alternativeName>
    <alternativeName>
        <fullName evidence="1">tRNA-guanine transglycosylase</fullName>
    </alternativeName>
</protein>
<gene>
    <name evidence="1" type="primary">tgt</name>
    <name type="ordered locus">SAR1719</name>
</gene>
<proteinExistence type="inferred from homology"/>
<reference key="1">
    <citation type="journal article" date="2004" name="Proc. Natl. Acad. Sci. U.S.A.">
        <title>Complete genomes of two clinical Staphylococcus aureus strains: evidence for the rapid evolution of virulence and drug resistance.</title>
        <authorList>
            <person name="Holden M.T.G."/>
            <person name="Feil E.J."/>
            <person name="Lindsay J.A."/>
            <person name="Peacock S.J."/>
            <person name="Day N.P.J."/>
            <person name="Enright M.C."/>
            <person name="Foster T.J."/>
            <person name="Moore C.E."/>
            <person name="Hurst L."/>
            <person name="Atkin R."/>
            <person name="Barron A."/>
            <person name="Bason N."/>
            <person name="Bentley S.D."/>
            <person name="Chillingworth C."/>
            <person name="Chillingworth T."/>
            <person name="Churcher C."/>
            <person name="Clark L."/>
            <person name="Corton C."/>
            <person name="Cronin A."/>
            <person name="Doggett J."/>
            <person name="Dowd L."/>
            <person name="Feltwell T."/>
            <person name="Hance Z."/>
            <person name="Harris B."/>
            <person name="Hauser H."/>
            <person name="Holroyd S."/>
            <person name="Jagels K."/>
            <person name="James K.D."/>
            <person name="Lennard N."/>
            <person name="Line A."/>
            <person name="Mayes R."/>
            <person name="Moule S."/>
            <person name="Mungall K."/>
            <person name="Ormond D."/>
            <person name="Quail M.A."/>
            <person name="Rabbinowitsch E."/>
            <person name="Rutherford K.M."/>
            <person name="Sanders M."/>
            <person name="Sharp S."/>
            <person name="Simmonds M."/>
            <person name="Stevens K."/>
            <person name="Whitehead S."/>
            <person name="Barrell B.G."/>
            <person name="Spratt B.G."/>
            <person name="Parkhill J."/>
        </authorList>
    </citation>
    <scope>NUCLEOTIDE SEQUENCE [LARGE SCALE GENOMIC DNA]</scope>
    <source>
        <strain>MRSA252</strain>
    </source>
</reference>
<accession>Q6GG65</accession>